<evidence type="ECO:0000255" key="1">
    <source>
        <dbReference type="HAMAP-Rule" id="MF_01315"/>
    </source>
</evidence>
<evidence type="ECO:0000305" key="2"/>
<comment type="function">
    <text evidence="1">Located at the top of the head of the 30S subunit, it contacts several helices of the 16S rRNA. In the 70S ribosome it contacts the 23S rRNA (bridge B1a) and protein L5 of the 50S subunit (bridge B1b), connecting the 2 subunits; these bridges are implicated in subunit movement. Contacts the tRNAs in the A and P-sites.</text>
</comment>
<comment type="subunit">
    <text evidence="1">Part of the 30S ribosomal subunit. Forms a loose heterodimer with protein S19. Forms two bridges to the 50S subunit in the 70S ribosome.</text>
</comment>
<comment type="similarity">
    <text evidence="1">Belongs to the universal ribosomal protein uS13 family.</text>
</comment>
<accession>A5CCJ1</accession>
<organism>
    <name type="scientific">Orientia tsutsugamushi (strain Boryong)</name>
    <name type="common">Rickettsia tsutsugamushi</name>
    <dbReference type="NCBI Taxonomy" id="357244"/>
    <lineage>
        <taxon>Bacteria</taxon>
        <taxon>Pseudomonadati</taxon>
        <taxon>Pseudomonadota</taxon>
        <taxon>Alphaproteobacteria</taxon>
        <taxon>Rickettsiales</taxon>
        <taxon>Rickettsiaceae</taxon>
        <taxon>Rickettsieae</taxon>
        <taxon>Orientia</taxon>
    </lineage>
</organism>
<dbReference type="EMBL" id="AM494475">
    <property type="protein sequence ID" value="CAM79421.1"/>
    <property type="molecule type" value="Genomic_DNA"/>
</dbReference>
<dbReference type="RefSeq" id="WP_011944419.1">
    <property type="nucleotide sequence ID" value="NC_009488.1"/>
</dbReference>
<dbReference type="SMR" id="A5CCJ1"/>
<dbReference type="KEGG" id="ots:OTBS_0355"/>
<dbReference type="eggNOG" id="COG0099">
    <property type="taxonomic scope" value="Bacteria"/>
</dbReference>
<dbReference type="HOGENOM" id="CLU_103849_1_2_5"/>
<dbReference type="Proteomes" id="UP000001565">
    <property type="component" value="Chromosome"/>
</dbReference>
<dbReference type="GO" id="GO:0005829">
    <property type="term" value="C:cytosol"/>
    <property type="evidence" value="ECO:0007669"/>
    <property type="project" value="TreeGrafter"/>
</dbReference>
<dbReference type="GO" id="GO:0015935">
    <property type="term" value="C:small ribosomal subunit"/>
    <property type="evidence" value="ECO:0007669"/>
    <property type="project" value="TreeGrafter"/>
</dbReference>
<dbReference type="GO" id="GO:0019843">
    <property type="term" value="F:rRNA binding"/>
    <property type="evidence" value="ECO:0007669"/>
    <property type="project" value="UniProtKB-UniRule"/>
</dbReference>
<dbReference type="GO" id="GO:0003735">
    <property type="term" value="F:structural constituent of ribosome"/>
    <property type="evidence" value="ECO:0007669"/>
    <property type="project" value="InterPro"/>
</dbReference>
<dbReference type="GO" id="GO:0000049">
    <property type="term" value="F:tRNA binding"/>
    <property type="evidence" value="ECO:0007669"/>
    <property type="project" value="UniProtKB-UniRule"/>
</dbReference>
<dbReference type="GO" id="GO:0006412">
    <property type="term" value="P:translation"/>
    <property type="evidence" value="ECO:0007669"/>
    <property type="project" value="UniProtKB-UniRule"/>
</dbReference>
<dbReference type="FunFam" id="1.10.8.50:FF:000001">
    <property type="entry name" value="30S ribosomal protein S13"/>
    <property type="match status" value="1"/>
</dbReference>
<dbReference type="Gene3D" id="1.10.8.50">
    <property type="match status" value="1"/>
</dbReference>
<dbReference type="Gene3D" id="4.10.910.10">
    <property type="entry name" value="30s ribosomal protein s13, domain 2"/>
    <property type="match status" value="1"/>
</dbReference>
<dbReference type="HAMAP" id="MF_01315">
    <property type="entry name" value="Ribosomal_uS13"/>
    <property type="match status" value="1"/>
</dbReference>
<dbReference type="InterPro" id="IPR027437">
    <property type="entry name" value="Rbsml_uS13_C"/>
</dbReference>
<dbReference type="InterPro" id="IPR001892">
    <property type="entry name" value="Ribosomal_uS13"/>
</dbReference>
<dbReference type="InterPro" id="IPR010979">
    <property type="entry name" value="Ribosomal_uS13-like_H2TH"/>
</dbReference>
<dbReference type="InterPro" id="IPR019980">
    <property type="entry name" value="Ribosomal_uS13_bac-type"/>
</dbReference>
<dbReference type="InterPro" id="IPR018269">
    <property type="entry name" value="Ribosomal_uS13_CS"/>
</dbReference>
<dbReference type="NCBIfam" id="TIGR03631">
    <property type="entry name" value="uS13_bact"/>
    <property type="match status" value="1"/>
</dbReference>
<dbReference type="PANTHER" id="PTHR10871">
    <property type="entry name" value="30S RIBOSOMAL PROTEIN S13/40S RIBOSOMAL PROTEIN S18"/>
    <property type="match status" value="1"/>
</dbReference>
<dbReference type="PANTHER" id="PTHR10871:SF1">
    <property type="entry name" value="SMALL RIBOSOMAL SUBUNIT PROTEIN US13M"/>
    <property type="match status" value="1"/>
</dbReference>
<dbReference type="Pfam" id="PF00416">
    <property type="entry name" value="Ribosomal_S13"/>
    <property type="match status" value="1"/>
</dbReference>
<dbReference type="PIRSF" id="PIRSF002134">
    <property type="entry name" value="Ribosomal_S13"/>
    <property type="match status" value="1"/>
</dbReference>
<dbReference type="SUPFAM" id="SSF46946">
    <property type="entry name" value="S13-like H2TH domain"/>
    <property type="match status" value="1"/>
</dbReference>
<dbReference type="PROSITE" id="PS00646">
    <property type="entry name" value="RIBOSOMAL_S13_1"/>
    <property type="match status" value="1"/>
</dbReference>
<dbReference type="PROSITE" id="PS50159">
    <property type="entry name" value="RIBOSOMAL_S13_2"/>
    <property type="match status" value="1"/>
</dbReference>
<sequence>MSRISNVNVPTNKRVMIGLTYIYGIGRSTAQKICQEVQVSVNKKVKDLSNQELVALRSIIESKYKVEGDLRREINLNIKKKKDIRCYEGLRHIRKLPVRGQNTHSNARTRKGKAIAIAGKKKPNK</sequence>
<keyword id="KW-1185">Reference proteome</keyword>
<keyword id="KW-0687">Ribonucleoprotein</keyword>
<keyword id="KW-0689">Ribosomal protein</keyword>
<keyword id="KW-0694">RNA-binding</keyword>
<keyword id="KW-0699">rRNA-binding</keyword>
<keyword id="KW-0820">tRNA-binding</keyword>
<protein>
    <recommendedName>
        <fullName evidence="1">Small ribosomal subunit protein uS13</fullName>
    </recommendedName>
    <alternativeName>
        <fullName evidence="2">30S ribosomal protein S13</fullName>
    </alternativeName>
</protein>
<proteinExistence type="inferred from homology"/>
<name>RS13_ORITB</name>
<feature type="chain" id="PRO_0000306667" description="Small ribosomal subunit protein uS13">
    <location>
        <begin position="1"/>
        <end position="125"/>
    </location>
</feature>
<gene>
    <name evidence="1" type="primary">rpsM</name>
    <name type="ordered locus">OTBS_0355</name>
</gene>
<reference key="1">
    <citation type="journal article" date="2007" name="Proc. Natl. Acad. Sci. U.S.A.">
        <title>The Orientia tsutsugamushi genome reveals massive proliferation of conjugative type IV secretion system and host-cell interaction genes.</title>
        <authorList>
            <person name="Cho N.-H."/>
            <person name="Kim H.-R."/>
            <person name="Lee J.-H."/>
            <person name="Kim S.-Y."/>
            <person name="Kim J."/>
            <person name="Cha S."/>
            <person name="Kim S.-Y."/>
            <person name="Darby A.C."/>
            <person name="Fuxelius H.-H."/>
            <person name="Yin J."/>
            <person name="Kim J.H."/>
            <person name="Kim J."/>
            <person name="Lee S.J."/>
            <person name="Koh Y.-S."/>
            <person name="Jang W.-J."/>
            <person name="Park K.-H."/>
            <person name="Andersson S.G.E."/>
            <person name="Choi M.-S."/>
            <person name="Kim I.-S."/>
        </authorList>
    </citation>
    <scope>NUCLEOTIDE SEQUENCE [LARGE SCALE GENOMIC DNA]</scope>
    <source>
        <strain>Boryong</strain>
    </source>
</reference>